<keyword id="KW-0004">4Fe-4S</keyword>
<keyword id="KW-0408">Iron</keyword>
<keyword id="KW-0411">Iron-sulfur</keyword>
<keyword id="KW-0414">Isoprene biosynthesis</keyword>
<keyword id="KW-0479">Metal-binding</keyword>
<keyword id="KW-0560">Oxidoreductase</keyword>
<keyword id="KW-1185">Reference proteome</keyword>
<reference key="1">
    <citation type="journal article" date="2003" name="J. Bacteriol.">
        <title>Complete genome sequence of the oral pathogenic bacterium Porphyromonas gingivalis strain W83.</title>
        <authorList>
            <person name="Nelson K.E."/>
            <person name="Fleischmann R.D."/>
            <person name="DeBoy R.T."/>
            <person name="Paulsen I.T."/>
            <person name="Fouts D.E."/>
            <person name="Eisen J.A."/>
            <person name="Daugherty S.C."/>
            <person name="Dodson R.J."/>
            <person name="Durkin A.S."/>
            <person name="Gwinn M.L."/>
            <person name="Haft D.H."/>
            <person name="Kolonay J.F."/>
            <person name="Nelson W.C."/>
            <person name="Mason T.M."/>
            <person name="Tallon L."/>
            <person name="Gray J."/>
            <person name="Granger D."/>
            <person name="Tettelin H."/>
            <person name="Dong H."/>
            <person name="Galvin J.L."/>
            <person name="Duncan M.J."/>
            <person name="Dewhirst F.E."/>
            <person name="Fraser C.M."/>
        </authorList>
    </citation>
    <scope>NUCLEOTIDE SEQUENCE [LARGE SCALE GENOMIC DNA]</scope>
    <source>
        <strain>ATCC BAA-308 / W83</strain>
    </source>
</reference>
<accession>Q7MVT7</accession>
<proteinExistence type="inferred from homology"/>
<protein>
    <recommendedName>
        <fullName evidence="1">4-hydroxy-3-methylbut-2-en-1-yl diphosphate synthase (flavodoxin)</fullName>
        <ecNumber evidence="1">1.17.7.3</ecNumber>
    </recommendedName>
    <alternativeName>
        <fullName evidence="1">1-hydroxy-2-methyl-2-(E)-butenyl 4-diphosphate synthase</fullName>
    </alternativeName>
</protein>
<sequence length="581" mass="64381">MLDLFGYKRRKTSVAQIGDTPLGGDFPIRIQSMANVSTMDTQASVDQAARIIDAGADYVRFTAQGVREAVNLQHIHAGLCRLGYHIPLVADIHFSPKAAEEALLHVEKVRINPGNFVEMKSGGNLTEEEAFDLGHKAVRERFGSFVEDAKRLGRAIRIGVNHGSLSERMLTRYGDTAEGMVQSCMEYLDVCHEHEFDDVVISMKASNTLVMTAAVRLLVERMDAADMHYPLHIGVTEAGDGEDGRIKSAVGIGSLLADGIGDTIRVSLSEDPEHEIPVARKLLAYIEKRNGHPSVAVPQPDRYDRDKLRRQETYAVGDFIGSKHIPIVISDRRQGDDHFDTELLPDIVLGADGRYYREDMLLENIVFRSIRQDDLTDDCLQTIEAISDTVIILESVGINPVAEWRAMLHRLELAGCRCPVILHRRYDCTDLEDLQLQASADMGAILLEGRGNGLMITADKLPSVAVNHLAFGILQATRLRMSRTEYISCPSCGRTLYNLQETVARIKAATAHLKELKIGIMGCIVNGPGEMADADYGYVGAGPGRIDLYKQKICVRRGIPQEQAVQQLIELIKENGDWKER</sequence>
<name>ISPG_PORGI</name>
<feature type="chain" id="PRO_0000190612" description="4-hydroxy-3-methylbut-2-en-1-yl diphosphate synthase (flavodoxin)">
    <location>
        <begin position="1"/>
        <end position="581"/>
    </location>
</feature>
<feature type="binding site" evidence="1">
    <location>
        <position position="489"/>
    </location>
    <ligand>
        <name>[4Fe-4S] cluster</name>
        <dbReference type="ChEBI" id="CHEBI:49883"/>
    </ligand>
</feature>
<feature type="binding site" evidence="1">
    <location>
        <position position="492"/>
    </location>
    <ligand>
        <name>[4Fe-4S] cluster</name>
        <dbReference type="ChEBI" id="CHEBI:49883"/>
    </ligand>
</feature>
<feature type="binding site" evidence="1">
    <location>
        <position position="523"/>
    </location>
    <ligand>
        <name>[4Fe-4S] cluster</name>
        <dbReference type="ChEBI" id="CHEBI:49883"/>
    </ligand>
</feature>
<feature type="binding site" evidence="1">
    <location>
        <position position="530"/>
    </location>
    <ligand>
        <name>[4Fe-4S] cluster</name>
        <dbReference type="ChEBI" id="CHEBI:49883"/>
    </ligand>
</feature>
<evidence type="ECO:0000255" key="1">
    <source>
        <dbReference type="HAMAP-Rule" id="MF_00159"/>
    </source>
</evidence>
<dbReference type="EC" id="1.17.7.3" evidence="1"/>
<dbReference type="EMBL" id="AE015924">
    <property type="protein sequence ID" value="AAQ66082.1"/>
    <property type="molecule type" value="Genomic_DNA"/>
</dbReference>
<dbReference type="RefSeq" id="WP_005874381.1">
    <property type="nucleotide sequence ID" value="NC_002950.2"/>
</dbReference>
<dbReference type="SMR" id="Q7MVT7"/>
<dbReference type="STRING" id="242619.PG_0952"/>
<dbReference type="EnsemblBacteria" id="AAQ66082">
    <property type="protein sequence ID" value="AAQ66082"/>
    <property type="gene ID" value="PG_0952"/>
</dbReference>
<dbReference type="KEGG" id="pgi:PG_0952"/>
<dbReference type="PATRIC" id="fig|242619.8.peg.880"/>
<dbReference type="eggNOG" id="COG0821">
    <property type="taxonomic scope" value="Bacteria"/>
</dbReference>
<dbReference type="HOGENOM" id="CLU_012689_0_0_10"/>
<dbReference type="BioCyc" id="PGIN242619:G1G02-885-MONOMER"/>
<dbReference type="UniPathway" id="UPA00056">
    <property type="reaction ID" value="UER00096"/>
</dbReference>
<dbReference type="Proteomes" id="UP000000588">
    <property type="component" value="Chromosome"/>
</dbReference>
<dbReference type="GO" id="GO:0051539">
    <property type="term" value="F:4 iron, 4 sulfur cluster binding"/>
    <property type="evidence" value="ECO:0007669"/>
    <property type="project" value="UniProtKB-UniRule"/>
</dbReference>
<dbReference type="GO" id="GO:0046429">
    <property type="term" value="F:4-hydroxy-3-methylbut-2-en-1-yl diphosphate synthase activity (ferredoxin)"/>
    <property type="evidence" value="ECO:0007669"/>
    <property type="project" value="UniProtKB-UniRule"/>
</dbReference>
<dbReference type="GO" id="GO:0141197">
    <property type="term" value="F:4-hydroxy-3-methylbut-2-enyl-diphosphate synthase activity (flavodoxin)"/>
    <property type="evidence" value="ECO:0007669"/>
    <property type="project" value="UniProtKB-EC"/>
</dbReference>
<dbReference type="GO" id="GO:0005506">
    <property type="term" value="F:iron ion binding"/>
    <property type="evidence" value="ECO:0007669"/>
    <property type="project" value="InterPro"/>
</dbReference>
<dbReference type="GO" id="GO:0019288">
    <property type="term" value="P:isopentenyl diphosphate biosynthetic process, methylerythritol 4-phosphate pathway"/>
    <property type="evidence" value="ECO:0007669"/>
    <property type="project" value="UniProtKB-UniRule"/>
</dbReference>
<dbReference type="GO" id="GO:0016114">
    <property type="term" value="P:terpenoid biosynthetic process"/>
    <property type="evidence" value="ECO:0007669"/>
    <property type="project" value="InterPro"/>
</dbReference>
<dbReference type="FunFam" id="3.30.413.10:FF:000006">
    <property type="entry name" value="4-hydroxy-3-methylbut-2-en-1-yl diphosphate synthase (flavodoxin)"/>
    <property type="match status" value="1"/>
</dbReference>
<dbReference type="Gene3D" id="3.20.20.20">
    <property type="entry name" value="Dihydropteroate synthase-like"/>
    <property type="match status" value="1"/>
</dbReference>
<dbReference type="Gene3D" id="3.30.413.10">
    <property type="entry name" value="Sulfite Reductase Hemoprotein, domain 1"/>
    <property type="match status" value="1"/>
</dbReference>
<dbReference type="HAMAP" id="MF_00159">
    <property type="entry name" value="IspG"/>
    <property type="match status" value="1"/>
</dbReference>
<dbReference type="InterPro" id="IPR011005">
    <property type="entry name" value="Dihydropteroate_synth-like_sf"/>
</dbReference>
<dbReference type="InterPro" id="IPR017178">
    <property type="entry name" value="IspG_atypical"/>
</dbReference>
<dbReference type="InterPro" id="IPR004588">
    <property type="entry name" value="IspG_bac-typ"/>
</dbReference>
<dbReference type="InterPro" id="IPR045854">
    <property type="entry name" value="NO2/SO3_Rdtase_4Fe4S_sf"/>
</dbReference>
<dbReference type="NCBIfam" id="TIGR00612">
    <property type="entry name" value="ispG_gcpE"/>
    <property type="match status" value="1"/>
</dbReference>
<dbReference type="NCBIfam" id="NF002534">
    <property type="entry name" value="PRK02048.1"/>
    <property type="match status" value="1"/>
</dbReference>
<dbReference type="PANTHER" id="PTHR30454">
    <property type="entry name" value="4-HYDROXY-3-METHYLBUT-2-EN-1-YL DIPHOSPHATE SYNTHASE"/>
    <property type="match status" value="1"/>
</dbReference>
<dbReference type="PANTHER" id="PTHR30454:SF0">
    <property type="entry name" value="4-HYDROXY-3-METHYLBUT-2-EN-1-YL DIPHOSPHATE SYNTHASE (FERREDOXIN), CHLOROPLASTIC"/>
    <property type="match status" value="1"/>
</dbReference>
<dbReference type="Pfam" id="PF04551">
    <property type="entry name" value="GcpE"/>
    <property type="match status" value="2"/>
</dbReference>
<dbReference type="PIRSF" id="PIRSF037336">
    <property type="entry name" value="IspG_like"/>
    <property type="match status" value="1"/>
</dbReference>
<dbReference type="SUPFAM" id="SSF51717">
    <property type="entry name" value="Dihydropteroate synthetase-like"/>
    <property type="match status" value="1"/>
</dbReference>
<dbReference type="SUPFAM" id="SSF56014">
    <property type="entry name" value="Nitrite and sulphite reductase 4Fe-4S domain-like"/>
    <property type="match status" value="1"/>
</dbReference>
<organism>
    <name type="scientific">Porphyromonas gingivalis (strain ATCC BAA-308 / W83)</name>
    <dbReference type="NCBI Taxonomy" id="242619"/>
    <lineage>
        <taxon>Bacteria</taxon>
        <taxon>Pseudomonadati</taxon>
        <taxon>Bacteroidota</taxon>
        <taxon>Bacteroidia</taxon>
        <taxon>Bacteroidales</taxon>
        <taxon>Porphyromonadaceae</taxon>
        <taxon>Porphyromonas</taxon>
    </lineage>
</organism>
<gene>
    <name evidence="1" type="primary">ispG</name>
    <name type="ordered locus">PG_0952</name>
</gene>
<comment type="function">
    <text evidence="1">Converts 2C-methyl-D-erythritol 2,4-cyclodiphosphate (ME-2,4cPP) into 1-hydroxy-2-methyl-2-(E)-butenyl 4-diphosphate.</text>
</comment>
<comment type="catalytic activity">
    <reaction evidence="1">
        <text>(2E)-4-hydroxy-3-methylbut-2-enyl diphosphate + oxidized [flavodoxin] + H2O + 2 H(+) = 2-C-methyl-D-erythritol 2,4-cyclic diphosphate + reduced [flavodoxin]</text>
        <dbReference type="Rhea" id="RHEA:43604"/>
        <dbReference type="Rhea" id="RHEA-COMP:10622"/>
        <dbReference type="Rhea" id="RHEA-COMP:10623"/>
        <dbReference type="ChEBI" id="CHEBI:15377"/>
        <dbReference type="ChEBI" id="CHEBI:15378"/>
        <dbReference type="ChEBI" id="CHEBI:57618"/>
        <dbReference type="ChEBI" id="CHEBI:58210"/>
        <dbReference type="ChEBI" id="CHEBI:58483"/>
        <dbReference type="ChEBI" id="CHEBI:128753"/>
        <dbReference type="EC" id="1.17.7.3"/>
    </reaction>
</comment>
<comment type="cofactor">
    <cofactor evidence="1">
        <name>[4Fe-4S] cluster</name>
        <dbReference type="ChEBI" id="CHEBI:49883"/>
    </cofactor>
    <text evidence="1">Binds 1 [4Fe-4S] cluster.</text>
</comment>
<comment type="pathway">
    <text evidence="1">Isoprenoid biosynthesis; isopentenyl diphosphate biosynthesis via DXP pathway; isopentenyl diphosphate from 1-deoxy-D-xylulose 5-phosphate: step 5/6.</text>
</comment>
<comment type="similarity">
    <text evidence="1">Belongs to the IspG family.</text>
</comment>